<reference key="1">
    <citation type="journal article" date="2009" name="J. Bacteriol.">
        <title>Complete genome sequence of Macrococcus caseolyticus strain JCSCS5402, reflecting the ancestral genome of the human-pathogenic staphylococci.</title>
        <authorList>
            <person name="Baba T."/>
            <person name="Kuwahara-Arai K."/>
            <person name="Uchiyama I."/>
            <person name="Takeuchi F."/>
            <person name="Ito T."/>
            <person name="Hiramatsu K."/>
        </authorList>
    </citation>
    <scope>NUCLEOTIDE SEQUENCE [LARGE SCALE GENOMIC DNA]</scope>
    <source>
        <strain>JCSC5402</strain>
    </source>
</reference>
<gene>
    <name evidence="1" type="primary">xpt</name>
    <name type="ordered locus">MCCL_1944</name>
</gene>
<dbReference type="EC" id="2.4.2.22" evidence="1"/>
<dbReference type="EMBL" id="AP009484">
    <property type="protein sequence ID" value="BAH18651.1"/>
    <property type="molecule type" value="Genomic_DNA"/>
</dbReference>
<dbReference type="RefSeq" id="WP_015912443.1">
    <property type="nucleotide sequence ID" value="NC_011999.1"/>
</dbReference>
<dbReference type="SMR" id="B9E8Y3"/>
<dbReference type="STRING" id="458233.MCCL_1944"/>
<dbReference type="GeneID" id="61130353"/>
<dbReference type="KEGG" id="mcl:MCCL_1944"/>
<dbReference type="eggNOG" id="COG0503">
    <property type="taxonomic scope" value="Bacteria"/>
</dbReference>
<dbReference type="HOGENOM" id="CLU_099015_0_0_9"/>
<dbReference type="OrthoDB" id="9790678at2"/>
<dbReference type="UniPathway" id="UPA00602">
    <property type="reaction ID" value="UER00658"/>
</dbReference>
<dbReference type="Proteomes" id="UP000001383">
    <property type="component" value="Chromosome"/>
</dbReference>
<dbReference type="GO" id="GO:0005737">
    <property type="term" value="C:cytoplasm"/>
    <property type="evidence" value="ECO:0007669"/>
    <property type="project" value="UniProtKB-SubCell"/>
</dbReference>
<dbReference type="GO" id="GO:0000310">
    <property type="term" value="F:xanthine phosphoribosyltransferase activity"/>
    <property type="evidence" value="ECO:0007669"/>
    <property type="project" value="UniProtKB-UniRule"/>
</dbReference>
<dbReference type="GO" id="GO:0006166">
    <property type="term" value="P:purine ribonucleoside salvage"/>
    <property type="evidence" value="ECO:0007669"/>
    <property type="project" value="UniProtKB-KW"/>
</dbReference>
<dbReference type="GO" id="GO:0046110">
    <property type="term" value="P:xanthine metabolic process"/>
    <property type="evidence" value="ECO:0007669"/>
    <property type="project" value="InterPro"/>
</dbReference>
<dbReference type="GO" id="GO:0032265">
    <property type="term" value="P:XMP salvage"/>
    <property type="evidence" value="ECO:0007669"/>
    <property type="project" value="UniProtKB-UniRule"/>
</dbReference>
<dbReference type="CDD" id="cd06223">
    <property type="entry name" value="PRTases_typeI"/>
    <property type="match status" value="1"/>
</dbReference>
<dbReference type="Gene3D" id="3.40.50.2020">
    <property type="match status" value="1"/>
</dbReference>
<dbReference type="HAMAP" id="MF_01184">
    <property type="entry name" value="XPRTase"/>
    <property type="match status" value="1"/>
</dbReference>
<dbReference type="InterPro" id="IPR000836">
    <property type="entry name" value="PRibTrfase_dom"/>
</dbReference>
<dbReference type="InterPro" id="IPR029057">
    <property type="entry name" value="PRTase-like"/>
</dbReference>
<dbReference type="InterPro" id="IPR050118">
    <property type="entry name" value="Pur/Pyrimidine_PRTase"/>
</dbReference>
<dbReference type="InterPro" id="IPR010079">
    <property type="entry name" value="Xanthine_PRibTrfase"/>
</dbReference>
<dbReference type="NCBIfam" id="NF006671">
    <property type="entry name" value="PRK09219.1"/>
    <property type="match status" value="1"/>
</dbReference>
<dbReference type="NCBIfam" id="TIGR01744">
    <property type="entry name" value="XPRTase"/>
    <property type="match status" value="1"/>
</dbReference>
<dbReference type="PANTHER" id="PTHR43864">
    <property type="entry name" value="HYPOXANTHINE/GUANINE PHOSPHORIBOSYLTRANSFERASE"/>
    <property type="match status" value="1"/>
</dbReference>
<dbReference type="PANTHER" id="PTHR43864:SF1">
    <property type="entry name" value="XANTHINE PHOSPHORIBOSYLTRANSFERASE"/>
    <property type="match status" value="1"/>
</dbReference>
<dbReference type="Pfam" id="PF00156">
    <property type="entry name" value="Pribosyltran"/>
    <property type="match status" value="1"/>
</dbReference>
<dbReference type="SUPFAM" id="SSF53271">
    <property type="entry name" value="PRTase-like"/>
    <property type="match status" value="1"/>
</dbReference>
<protein>
    <recommendedName>
        <fullName evidence="1">Xanthine phosphoribosyltransferase</fullName>
        <shortName evidence="1">XPRTase</shortName>
        <ecNumber evidence="1">2.4.2.22</ecNumber>
    </recommendedName>
</protein>
<name>XPT_MACCJ</name>
<comment type="function">
    <text evidence="1">Converts the preformed base xanthine, a product of nucleic acid breakdown, to xanthosine 5'-monophosphate (XMP), so it can be reused for RNA or DNA synthesis.</text>
</comment>
<comment type="catalytic activity">
    <reaction evidence="1">
        <text>XMP + diphosphate = xanthine + 5-phospho-alpha-D-ribose 1-diphosphate</text>
        <dbReference type="Rhea" id="RHEA:10800"/>
        <dbReference type="ChEBI" id="CHEBI:17712"/>
        <dbReference type="ChEBI" id="CHEBI:33019"/>
        <dbReference type="ChEBI" id="CHEBI:57464"/>
        <dbReference type="ChEBI" id="CHEBI:58017"/>
        <dbReference type="EC" id="2.4.2.22"/>
    </reaction>
</comment>
<comment type="pathway">
    <text evidence="1">Purine metabolism; XMP biosynthesis via salvage pathway; XMP from xanthine: step 1/1.</text>
</comment>
<comment type="subunit">
    <text evidence="1">Homodimer.</text>
</comment>
<comment type="subcellular location">
    <subcellularLocation>
        <location evidence="1">Cytoplasm</location>
    </subcellularLocation>
</comment>
<comment type="similarity">
    <text evidence="1">Belongs to the purine/pyrimidine phosphoribosyltransferase family. Xpt subfamily.</text>
</comment>
<organism>
    <name type="scientific">Macrococcus caseolyticus (strain JCSC5402)</name>
    <name type="common">Macrococcoides caseolyticum</name>
    <dbReference type="NCBI Taxonomy" id="458233"/>
    <lineage>
        <taxon>Bacteria</taxon>
        <taxon>Bacillati</taxon>
        <taxon>Bacillota</taxon>
        <taxon>Bacilli</taxon>
        <taxon>Bacillales</taxon>
        <taxon>Staphylococcaceae</taxon>
        <taxon>Macrococcoides</taxon>
    </lineage>
</organism>
<keyword id="KW-0963">Cytoplasm</keyword>
<keyword id="KW-0328">Glycosyltransferase</keyword>
<keyword id="KW-0660">Purine salvage</keyword>
<keyword id="KW-1185">Reference proteome</keyword>
<keyword id="KW-0808">Transferase</keyword>
<sequence length="194" mass="21132">MEKLQQRVKEDGVVIDGGILKVDSFLNHQIDPELMYEVGETIYNKYKDEGITKVLTIEASGIAPAIMTALKFKVPCLFAKKSVPSTLTEEVYHTDIHSYTKNKTSHVVVSKRFLSENDRVVIIDDFLANGEAALGLYNLVQQAGATCVGVGIVVEKSFQSGKQRLLDAGLDVTSLCEIAALDNGKVTLVGEGEL</sequence>
<feature type="chain" id="PRO_1000164452" description="Xanthine phosphoribosyltransferase">
    <location>
        <begin position="1"/>
        <end position="194"/>
    </location>
</feature>
<feature type="binding site" evidence="1">
    <location>
        <position position="20"/>
    </location>
    <ligand>
        <name>xanthine</name>
        <dbReference type="ChEBI" id="CHEBI:17712"/>
    </ligand>
</feature>
<feature type="binding site" evidence="1">
    <location>
        <position position="27"/>
    </location>
    <ligand>
        <name>xanthine</name>
        <dbReference type="ChEBI" id="CHEBI:17712"/>
    </ligand>
</feature>
<feature type="binding site" evidence="1">
    <location>
        <begin position="128"/>
        <end position="132"/>
    </location>
    <ligand>
        <name>5-phospho-alpha-D-ribose 1-diphosphate</name>
        <dbReference type="ChEBI" id="CHEBI:58017"/>
    </ligand>
</feature>
<feature type="binding site" evidence="1">
    <location>
        <position position="156"/>
    </location>
    <ligand>
        <name>xanthine</name>
        <dbReference type="ChEBI" id="CHEBI:17712"/>
    </ligand>
</feature>
<proteinExistence type="inferred from homology"/>
<accession>B9E8Y3</accession>
<evidence type="ECO:0000255" key="1">
    <source>
        <dbReference type="HAMAP-Rule" id="MF_01184"/>
    </source>
</evidence>